<evidence type="ECO:0000255" key="1">
    <source>
        <dbReference type="HAMAP-Rule" id="MF_00374"/>
    </source>
</evidence>
<evidence type="ECO:0000305" key="2"/>
<gene>
    <name evidence="1" type="primary">rpmC</name>
    <name type="ordered locus">LVIS_1682</name>
</gene>
<reference key="1">
    <citation type="journal article" date="2006" name="Proc. Natl. Acad. Sci. U.S.A.">
        <title>Comparative genomics of the lactic acid bacteria.</title>
        <authorList>
            <person name="Makarova K.S."/>
            <person name="Slesarev A."/>
            <person name="Wolf Y.I."/>
            <person name="Sorokin A."/>
            <person name="Mirkin B."/>
            <person name="Koonin E.V."/>
            <person name="Pavlov A."/>
            <person name="Pavlova N."/>
            <person name="Karamychev V."/>
            <person name="Polouchine N."/>
            <person name="Shakhova V."/>
            <person name="Grigoriev I."/>
            <person name="Lou Y."/>
            <person name="Rohksar D."/>
            <person name="Lucas S."/>
            <person name="Huang K."/>
            <person name="Goodstein D.M."/>
            <person name="Hawkins T."/>
            <person name="Plengvidhya V."/>
            <person name="Welker D."/>
            <person name="Hughes J."/>
            <person name="Goh Y."/>
            <person name="Benson A."/>
            <person name="Baldwin K."/>
            <person name="Lee J.-H."/>
            <person name="Diaz-Muniz I."/>
            <person name="Dosti B."/>
            <person name="Smeianov V."/>
            <person name="Wechter W."/>
            <person name="Barabote R."/>
            <person name="Lorca G."/>
            <person name="Altermann E."/>
            <person name="Barrangou R."/>
            <person name="Ganesan B."/>
            <person name="Xie Y."/>
            <person name="Rawsthorne H."/>
            <person name="Tamir D."/>
            <person name="Parker C."/>
            <person name="Breidt F."/>
            <person name="Broadbent J.R."/>
            <person name="Hutkins R."/>
            <person name="O'Sullivan D."/>
            <person name="Steele J."/>
            <person name="Unlu G."/>
            <person name="Saier M.H. Jr."/>
            <person name="Klaenhammer T."/>
            <person name="Richardson P."/>
            <person name="Kozyavkin S."/>
            <person name="Weimer B.C."/>
            <person name="Mills D.A."/>
        </authorList>
    </citation>
    <scope>NUCLEOTIDE SEQUENCE [LARGE SCALE GENOMIC DNA]</scope>
    <source>
        <strain>ATCC 367 / BCRC 12310 / CIP 105137 / JCM 1170 / LMG 11437 / NCIMB 947 / NCTC 947</strain>
    </source>
</reference>
<keyword id="KW-1185">Reference proteome</keyword>
<keyword id="KW-0687">Ribonucleoprotein</keyword>
<keyword id="KW-0689">Ribosomal protein</keyword>
<sequence length="64" mass="7581">MKTKEINELTTAEMLDKEKSYKDELFNLRFQLATGQLENTARLKQVRKNIARLKTALRQQELNK</sequence>
<feature type="chain" id="PRO_1000007503" description="Large ribosomal subunit protein uL29">
    <location>
        <begin position="1"/>
        <end position="64"/>
    </location>
</feature>
<name>RL29_LEVBA</name>
<protein>
    <recommendedName>
        <fullName evidence="1">Large ribosomal subunit protein uL29</fullName>
    </recommendedName>
    <alternativeName>
        <fullName evidence="2">50S ribosomal protein L29</fullName>
    </alternativeName>
</protein>
<proteinExistence type="inferred from homology"/>
<accession>Q03PW5</accession>
<organism>
    <name type="scientific">Levilactobacillus brevis (strain ATCC 367 / BCRC 12310 / CIP 105137 / JCM 1170 / LMG 11437 / NCIMB 947 / NCTC 947)</name>
    <name type="common">Lactobacillus brevis</name>
    <dbReference type="NCBI Taxonomy" id="387344"/>
    <lineage>
        <taxon>Bacteria</taxon>
        <taxon>Bacillati</taxon>
        <taxon>Bacillota</taxon>
        <taxon>Bacilli</taxon>
        <taxon>Lactobacillales</taxon>
        <taxon>Lactobacillaceae</taxon>
        <taxon>Levilactobacillus</taxon>
    </lineage>
</organism>
<dbReference type="EMBL" id="CP000416">
    <property type="protein sequence ID" value="ABJ64757.1"/>
    <property type="molecule type" value="Genomic_DNA"/>
</dbReference>
<dbReference type="RefSeq" id="WP_011668491.1">
    <property type="nucleotide sequence ID" value="NC_008497.1"/>
</dbReference>
<dbReference type="SMR" id="Q03PW5"/>
<dbReference type="STRING" id="387344.LVIS_1682"/>
<dbReference type="GeneID" id="56993543"/>
<dbReference type="KEGG" id="lbr:LVIS_1682"/>
<dbReference type="eggNOG" id="COG0255">
    <property type="taxonomic scope" value="Bacteria"/>
</dbReference>
<dbReference type="HOGENOM" id="CLU_158491_5_2_9"/>
<dbReference type="Proteomes" id="UP000001652">
    <property type="component" value="Chromosome"/>
</dbReference>
<dbReference type="GO" id="GO:0022625">
    <property type="term" value="C:cytosolic large ribosomal subunit"/>
    <property type="evidence" value="ECO:0007669"/>
    <property type="project" value="TreeGrafter"/>
</dbReference>
<dbReference type="GO" id="GO:0003735">
    <property type="term" value="F:structural constituent of ribosome"/>
    <property type="evidence" value="ECO:0007669"/>
    <property type="project" value="InterPro"/>
</dbReference>
<dbReference type="GO" id="GO:0006412">
    <property type="term" value="P:translation"/>
    <property type="evidence" value="ECO:0007669"/>
    <property type="project" value="UniProtKB-UniRule"/>
</dbReference>
<dbReference type="CDD" id="cd00427">
    <property type="entry name" value="Ribosomal_L29_HIP"/>
    <property type="match status" value="1"/>
</dbReference>
<dbReference type="FunFam" id="1.10.287.310:FF:000001">
    <property type="entry name" value="50S ribosomal protein L29"/>
    <property type="match status" value="1"/>
</dbReference>
<dbReference type="Gene3D" id="1.10.287.310">
    <property type="match status" value="1"/>
</dbReference>
<dbReference type="HAMAP" id="MF_00374">
    <property type="entry name" value="Ribosomal_uL29"/>
    <property type="match status" value="1"/>
</dbReference>
<dbReference type="InterPro" id="IPR050063">
    <property type="entry name" value="Ribosomal_protein_uL29"/>
</dbReference>
<dbReference type="InterPro" id="IPR001854">
    <property type="entry name" value="Ribosomal_uL29"/>
</dbReference>
<dbReference type="InterPro" id="IPR018254">
    <property type="entry name" value="Ribosomal_uL29_CS"/>
</dbReference>
<dbReference type="InterPro" id="IPR036049">
    <property type="entry name" value="Ribosomal_uL29_sf"/>
</dbReference>
<dbReference type="NCBIfam" id="TIGR00012">
    <property type="entry name" value="L29"/>
    <property type="match status" value="1"/>
</dbReference>
<dbReference type="PANTHER" id="PTHR10916">
    <property type="entry name" value="60S RIBOSOMAL PROTEIN L35/50S RIBOSOMAL PROTEIN L29"/>
    <property type="match status" value="1"/>
</dbReference>
<dbReference type="PANTHER" id="PTHR10916:SF0">
    <property type="entry name" value="LARGE RIBOSOMAL SUBUNIT PROTEIN UL29C"/>
    <property type="match status" value="1"/>
</dbReference>
<dbReference type="Pfam" id="PF00831">
    <property type="entry name" value="Ribosomal_L29"/>
    <property type="match status" value="1"/>
</dbReference>
<dbReference type="SUPFAM" id="SSF46561">
    <property type="entry name" value="Ribosomal protein L29 (L29p)"/>
    <property type="match status" value="1"/>
</dbReference>
<dbReference type="PROSITE" id="PS00579">
    <property type="entry name" value="RIBOSOMAL_L29"/>
    <property type="match status" value="1"/>
</dbReference>
<comment type="similarity">
    <text evidence="1">Belongs to the universal ribosomal protein uL29 family.</text>
</comment>